<dbReference type="EMBL" id="AF016028">
    <property type="protein sequence ID" value="AAC61660.2"/>
    <property type="molecule type" value="mRNA"/>
</dbReference>
<dbReference type="EMBL" id="AL136756">
    <property type="protein sequence ID" value="CAB66690.1"/>
    <property type="molecule type" value="mRNA"/>
</dbReference>
<dbReference type="EMBL" id="AK092925">
    <property type="protein sequence ID" value="BAG52629.1"/>
    <property type="molecule type" value="mRNA"/>
</dbReference>
<dbReference type="EMBL" id="AC022509">
    <property type="status" value="NOT_ANNOTATED_CDS"/>
    <property type="molecule type" value="Genomic_DNA"/>
</dbReference>
<dbReference type="EMBL" id="AC055720">
    <property type="status" value="NOT_ANNOTATED_CDS"/>
    <property type="molecule type" value="Genomic_DNA"/>
</dbReference>
<dbReference type="EMBL" id="BC062299">
    <property type="protein sequence ID" value="AAH62299.1"/>
    <property type="molecule type" value="mRNA"/>
</dbReference>
<dbReference type="EMBL" id="X89105">
    <property type="protein sequence ID" value="CAA61479.1"/>
    <property type="molecule type" value="mRNA"/>
</dbReference>
<dbReference type="CCDS" id="CCDS44850.1">
    <molecule id="Q14714-3"/>
</dbReference>
<dbReference type="CCDS" id="CCDS8707.1">
    <molecule id="Q14714-1"/>
</dbReference>
<dbReference type="PIR" id="S57712">
    <property type="entry name" value="S57712"/>
</dbReference>
<dbReference type="RefSeq" id="NP_001129295.1">
    <molecule id="Q14714-3"/>
    <property type="nucleotide sequence ID" value="NM_001135823.1"/>
</dbReference>
<dbReference type="RefSeq" id="NP_005077.2">
    <molecule id="Q14714-1"/>
    <property type="nucleotide sequence ID" value="NM_005086.4"/>
</dbReference>
<dbReference type="RefSeq" id="XP_011519155.1">
    <molecule id="Q14714-3"/>
    <property type="nucleotide sequence ID" value="XM_011520853.4"/>
</dbReference>
<dbReference type="RefSeq" id="XP_011519156.1">
    <molecule id="Q14714-3"/>
    <property type="nucleotide sequence ID" value="XM_011520854.3"/>
</dbReference>
<dbReference type="RefSeq" id="XP_011519157.1">
    <molecule id="Q14714-3"/>
    <property type="nucleotide sequence ID" value="XM_011520855.2"/>
</dbReference>
<dbReference type="RefSeq" id="XP_054229270.1">
    <molecule id="Q14714-3"/>
    <property type="nucleotide sequence ID" value="XM_054373295.1"/>
</dbReference>
<dbReference type="RefSeq" id="XP_054229271.1">
    <molecule id="Q14714-3"/>
    <property type="nucleotide sequence ID" value="XM_054373296.1"/>
</dbReference>
<dbReference type="RefSeq" id="XP_054229272.1">
    <molecule id="Q14714-3"/>
    <property type="nucleotide sequence ID" value="XM_054373297.1"/>
</dbReference>
<dbReference type="SMR" id="Q14714"/>
<dbReference type="BioGRID" id="113755">
    <property type="interactions" value="3"/>
</dbReference>
<dbReference type="ComplexPortal" id="CPX-2424">
    <property type="entry name" value="Dystrophin glycoprotein complex, skeletal muscle variant"/>
</dbReference>
<dbReference type="ComplexPortal" id="CPX-2443">
    <property type="entry name" value="Dystrophin glycoprotein complex, neuromuscular junction variant"/>
</dbReference>
<dbReference type="ComplexPortal" id="CPX-2454">
    <property type="entry name" value="Dystrophin glycoprotein complex, retinal outer plexiform layer variant"/>
</dbReference>
<dbReference type="ComplexPortal" id="CPX-2455">
    <property type="entry name" value="Dystrophin glycoprotein complex, retinal inner limiting membrane variant"/>
</dbReference>
<dbReference type="CORUM" id="Q14714"/>
<dbReference type="FunCoup" id="Q14714">
    <property type="interactions" value="523"/>
</dbReference>
<dbReference type="IntAct" id="Q14714">
    <property type="interactions" value="2"/>
</dbReference>
<dbReference type="MINT" id="Q14714"/>
<dbReference type="STRING" id="9606.ENSP00000242729"/>
<dbReference type="iPTMnet" id="Q14714"/>
<dbReference type="PhosphoSitePlus" id="Q14714"/>
<dbReference type="SwissPalm" id="Q14714"/>
<dbReference type="BioMuta" id="SSPN"/>
<dbReference type="DMDM" id="13431900"/>
<dbReference type="MassIVE" id="Q14714"/>
<dbReference type="PaxDb" id="9606-ENSP00000242729"/>
<dbReference type="PeptideAtlas" id="Q14714"/>
<dbReference type="ProteomicsDB" id="3623"/>
<dbReference type="ProteomicsDB" id="60142">
    <molecule id="Q14714-1"/>
</dbReference>
<dbReference type="ProteomicsDB" id="60143">
    <molecule id="Q14714-2"/>
</dbReference>
<dbReference type="Antibodypedia" id="24301">
    <property type="antibodies" value="67 antibodies from 20 providers"/>
</dbReference>
<dbReference type="DNASU" id="8082"/>
<dbReference type="Ensembl" id="ENST00000242729.7">
    <molecule id="Q14714-1"/>
    <property type="protein sequence ID" value="ENSP00000242729.2"/>
    <property type="gene ID" value="ENSG00000123096.12"/>
</dbReference>
<dbReference type="Ensembl" id="ENST00000422622.3">
    <molecule id="Q14714-3"/>
    <property type="protein sequence ID" value="ENSP00000396087.2"/>
    <property type="gene ID" value="ENSG00000123096.12"/>
</dbReference>
<dbReference type="Ensembl" id="ENST00000540266.5">
    <molecule id="Q14714-3"/>
    <property type="protein sequence ID" value="ENSP00000442893.1"/>
    <property type="gene ID" value="ENSG00000123096.12"/>
</dbReference>
<dbReference type="GeneID" id="8082"/>
<dbReference type="KEGG" id="hsa:8082"/>
<dbReference type="MANE-Select" id="ENST00000242729.7">
    <property type="protein sequence ID" value="ENSP00000242729.2"/>
    <property type="RefSeq nucleotide sequence ID" value="NM_005086.5"/>
    <property type="RefSeq protein sequence ID" value="NP_005077.2"/>
</dbReference>
<dbReference type="UCSC" id="uc001rhd.4">
    <molecule id="Q14714-1"/>
    <property type="organism name" value="human"/>
</dbReference>
<dbReference type="AGR" id="HGNC:11322"/>
<dbReference type="CTD" id="8082"/>
<dbReference type="DisGeNET" id="8082"/>
<dbReference type="GeneCards" id="SSPN"/>
<dbReference type="HGNC" id="HGNC:11322">
    <property type="gene designation" value="SSPN"/>
</dbReference>
<dbReference type="HPA" id="ENSG00000123096">
    <property type="expression patterns" value="Tissue enhanced (tongue)"/>
</dbReference>
<dbReference type="MIM" id="601599">
    <property type="type" value="gene"/>
</dbReference>
<dbReference type="neXtProt" id="NX_Q14714"/>
<dbReference type="OpenTargets" id="ENSG00000123096"/>
<dbReference type="PharmGKB" id="PA36146"/>
<dbReference type="VEuPathDB" id="HostDB:ENSG00000123096"/>
<dbReference type="eggNOG" id="ENOG502RYPH">
    <property type="taxonomic scope" value="Eukaryota"/>
</dbReference>
<dbReference type="GeneTree" id="ENSGT00390000007747"/>
<dbReference type="HOGENOM" id="CLU_1271931_0_0_1"/>
<dbReference type="InParanoid" id="Q14714"/>
<dbReference type="OMA" id="RMCSLTT"/>
<dbReference type="OrthoDB" id="10027693at2759"/>
<dbReference type="PAN-GO" id="Q14714">
    <property type="GO annotations" value="1 GO annotation based on evolutionary models"/>
</dbReference>
<dbReference type="PhylomeDB" id="Q14714"/>
<dbReference type="TreeFam" id="TF332100"/>
<dbReference type="PathwayCommons" id="Q14714"/>
<dbReference type="Reactome" id="R-HSA-9913351">
    <property type="pathway name" value="Formation of the dystrophin-glycoprotein complex (DGC)"/>
</dbReference>
<dbReference type="SignaLink" id="Q14714"/>
<dbReference type="SIGNOR" id="Q14714"/>
<dbReference type="BioGRID-ORCS" id="8082">
    <property type="hits" value="13 hits in 1154 CRISPR screens"/>
</dbReference>
<dbReference type="ChiTaRS" id="SSPN">
    <property type="organism name" value="human"/>
</dbReference>
<dbReference type="GenomeRNAi" id="8082"/>
<dbReference type="Pharos" id="Q14714">
    <property type="development level" value="Tbio"/>
</dbReference>
<dbReference type="PRO" id="PR:Q14714"/>
<dbReference type="Proteomes" id="UP000005640">
    <property type="component" value="Chromosome 12"/>
</dbReference>
<dbReference type="RNAct" id="Q14714">
    <property type="molecule type" value="protein"/>
</dbReference>
<dbReference type="Bgee" id="ENSG00000123096">
    <property type="expression patterns" value="Expressed in synovial joint and 210 other cell types or tissues"/>
</dbReference>
<dbReference type="ExpressionAtlas" id="Q14714">
    <property type="expression patterns" value="baseline and differential"/>
</dbReference>
<dbReference type="GO" id="GO:0016010">
    <property type="term" value="C:dystrophin-associated glycoprotein complex"/>
    <property type="evidence" value="ECO:0000304"/>
    <property type="project" value="ProtInc"/>
</dbReference>
<dbReference type="GO" id="GO:0000139">
    <property type="term" value="C:Golgi membrane"/>
    <property type="evidence" value="ECO:0000304"/>
    <property type="project" value="Reactome"/>
</dbReference>
<dbReference type="GO" id="GO:0005886">
    <property type="term" value="C:plasma membrane"/>
    <property type="evidence" value="ECO:0000304"/>
    <property type="project" value="Reactome"/>
</dbReference>
<dbReference type="GO" id="GO:0045211">
    <property type="term" value="C:postsynaptic membrane"/>
    <property type="evidence" value="ECO:0007669"/>
    <property type="project" value="UniProtKB-SubCell"/>
</dbReference>
<dbReference type="GO" id="GO:0042383">
    <property type="term" value="C:sarcolemma"/>
    <property type="evidence" value="ECO:0000318"/>
    <property type="project" value="GO_Central"/>
</dbReference>
<dbReference type="GO" id="GO:0030133">
    <property type="term" value="C:transport vesicle"/>
    <property type="evidence" value="ECO:0000314"/>
    <property type="project" value="LIFEdb"/>
</dbReference>
<dbReference type="GO" id="GO:0007155">
    <property type="term" value="P:cell adhesion"/>
    <property type="evidence" value="ECO:0000304"/>
    <property type="project" value="ProtInc"/>
</dbReference>
<dbReference type="GO" id="GO:0006936">
    <property type="term" value="P:muscle contraction"/>
    <property type="evidence" value="ECO:0000304"/>
    <property type="project" value="ProtInc"/>
</dbReference>
<dbReference type="InterPro" id="IPR007237">
    <property type="entry name" value="CD20-like"/>
</dbReference>
<dbReference type="InterPro" id="IPR030429">
    <property type="entry name" value="Sarcospan"/>
</dbReference>
<dbReference type="PANTHER" id="PTHR15260">
    <property type="entry name" value="SARCOSPAN"/>
    <property type="match status" value="1"/>
</dbReference>
<dbReference type="PANTHER" id="PTHR15260:SF1">
    <property type="entry name" value="SARCOSPAN"/>
    <property type="match status" value="1"/>
</dbReference>
<dbReference type="Pfam" id="PF04103">
    <property type="entry name" value="CD20"/>
    <property type="match status" value="1"/>
</dbReference>
<gene>
    <name type="primary">SSPN</name>
    <name type="synonym">KRAG</name>
</gene>
<comment type="function">
    <text>Component of the dystrophin-glycoprotein complex (DGC), a complex that spans the muscle plasma membrane and forms a link between the F-actin cytoskeleton and the extracellular matrix. Preferentially associates with the sarcoglycan subcomplex of the DGC.</text>
</comment>
<comment type="subcellular location">
    <subcellularLocation>
        <location evidence="1">Cell membrane</location>
        <topology evidence="1">Multi-pass membrane protein</topology>
    </subcellularLocation>
    <subcellularLocation>
        <location evidence="1">Cell membrane</location>
        <location evidence="1">Sarcolemma</location>
    </subcellularLocation>
    <subcellularLocation>
        <location evidence="1">Postsynaptic cell membrane</location>
        <topology evidence="1">Multi-pass membrane protein</topology>
    </subcellularLocation>
    <text evidence="1">Also found in myotendinous junctions and in the postsynaptic membrane of neuromuscular junctions.</text>
</comment>
<comment type="alternative products">
    <event type="alternative splicing"/>
    <isoform>
        <id>Q14714-1</id>
        <name>1</name>
        <name>SPN1</name>
        <sequence type="displayed"/>
    </isoform>
    <isoform>
        <id>Q14714-2</id>
        <name>2</name>
        <name>SPN2</name>
        <sequence type="described" ref="VSP_004431"/>
    </isoform>
    <isoform>
        <id>Q14714-3</id>
        <name>3</name>
        <sequence type="described" ref="VSP_046351"/>
    </isoform>
</comment>
<comment type="tissue specificity">
    <text>Isoform 1 is expressed exclusively in heart and skeletal muscle. Isoform 2 is expressed in heart, skeletal muscle, thymus, prostate, testis, ovary, small intestine, colon and spleen.</text>
</comment>
<organism>
    <name type="scientific">Homo sapiens</name>
    <name type="common">Human</name>
    <dbReference type="NCBI Taxonomy" id="9606"/>
    <lineage>
        <taxon>Eukaryota</taxon>
        <taxon>Metazoa</taxon>
        <taxon>Chordata</taxon>
        <taxon>Craniata</taxon>
        <taxon>Vertebrata</taxon>
        <taxon>Euteleostomi</taxon>
        <taxon>Mammalia</taxon>
        <taxon>Eutheria</taxon>
        <taxon>Euarchontoglires</taxon>
        <taxon>Primates</taxon>
        <taxon>Haplorrhini</taxon>
        <taxon>Catarrhini</taxon>
        <taxon>Hominidae</taxon>
        <taxon>Homo</taxon>
    </lineage>
</organism>
<evidence type="ECO:0000250" key="1"/>
<evidence type="ECO:0000255" key="2"/>
<evidence type="ECO:0000256" key="3">
    <source>
        <dbReference type="SAM" id="MobiDB-lite"/>
    </source>
</evidence>
<evidence type="ECO:0000303" key="4">
    <source>
    </source>
</evidence>
<evidence type="ECO:0000303" key="5">
    <source>
    </source>
</evidence>
<evidence type="ECO:0000303" key="6">
    <source>
    </source>
</evidence>
<evidence type="ECO:0000305" key="7"/>
<name>SSPN_HUMAN</name>
<protein>
    <recommendedName>
        <fullName>Sarcospan</fullName>
    </recommendedName>
    <alternativeName>
        <fullName>K-ras oncogene-associated protein</fullName>
    </alternativeName>
    <alternativeName>
        <fullName>Kirsten-ras-associated protein</fullName>
    </alternativeName>
</protein>
<accession>Q14714</accession>
<accession>B3KS67</accession>
<sequence length="243" mass="26618">MGKNKQPRGQQRQGGPPAADAAGPDDMEPKKGTGAPKECGEEEPRTCCGCRFPLLLALLQLALGIAVTVVGFLMASISSSLLVRDTPFWAGIIVCLVAYLGLFMLCVSYQVDERTCIQFSMKLLYFLLSALGLTVCVLAVAFAAHHYSQLTQFTCETTLDSCQCKLPSSEPLSRTFVYRDVTDCTSVTGTFKLFLLIQMILNLVCGLVCLLACFVMWKHRYQVFYVGVRICSLTASEGPQQKI</sequence>
<keyword id="KW-0025">Alternative splicing</keyword>
<keyword id="KW-1003">Cell membrane</keyword>
<keyword id="KW-0472">Membrane</keyword>
<keyword id="KW-0628">Postsynaptic cell membrane</keyword>
<keyword id="KW-1267">Proteomics identification</keyword>
<keyword id="KW-1185">Reference proteome</keyword>
<keyword id="KW-0770">Synapse</keyword>
<keyword id="KW-0812">Transmembrane</keyword>
<keyword id="KW-1133">Transmembrane helix</keyword>
<reference key="1">
    <citation type="journal article" date="1997" name="J. Biol. Chem.">
        <title>Sarcospan, the 25-kDa transmembrane component of the dystrophin-glycoprotein complex.</title>
        <authorList>
            <person name="Crosbie R.H."/>
            <person name="Heighway J."/>
            <person name="Venzke D.P."/>
            <person name="Lee J.C."/>
            <person name="Campbell K.P."/>
        </authorList>
    </citation>
    <scope>NUCLEOTIDE SEQUENCE [MRNA] (ISOFORM 2)</scope>
    <source>
        <tissue>Skeletal muscle</tissue>
    </source>
</reference>
<reference key="2">
    <citation type="submission" date="2000-04" db="EMBL/GenBank/DDBJ databases">
        <authorList>
            <person name="Crosbie R.H."/>
            <person name="Heighway J."/>
            <person name="Venzke D.P."/>
            <person name="Campbell K.P."/>
        </authorList>
    </citation>
    <scope>SEQUENCE REVISION</scope>
</reference>
<reference key="3">
    <citation type="journal article" date="2004" name="Nat. Genet.">
        <title>Complete sequencing and characterization of 21,243 full-length human cDNAs.</title>
        <authorList>
            <person name="Ota T."/>
            <person name="Suzuki Y."/>
            <person name="Nishikawa T."/>
            <person name="Otsuki T."/>
            <person name="Sugiyama T."/>
            <person name="Irie R."/>
            <person name="Wakamatsu A."/>
            <person name="Hayashi K."/>
            <person name="Sato H."/>
            <person name="Nagai K."/>
            <person name="Kimura K."/>
            <person name="Makita H."/>
            <person name="Sekine M."/>
            <person name="Obayashi M."/>
            <person name="Nishi T."/>
            <person name="Shibahara T."/>
            <person name="Tanaka T."/>
            <person name="Ishii S."/>
            <person name="Yamamoto J."/>
            <person name="Saito K."/>
            <person name="Kawai Y."/>
            <person name="Isono Y."/>
            <person name="Nakamura Y."/>
            <person name="Nagahari K."/>
            <person name="Murakami K."/>
            <person name="Yasuda T."/>
            <person name="Iwayanagi T."/>
            <person name="Wagatsuma M."/>
            <person name="Shiratori A."/>
            <person name="Sudo H."/>
            <person name="Hosoiri T."/>
            <person name="Kaku Y."/>
            <person name="Kodaira H."/>
            <person name="Kondo H."/>
            <person name="Sugawara M."/>
            <person name="Takahashi M."/>
            <person name="Kanda K."/>
            <person name="Yokoi T."/>
            <person name="Furuya T."/>
            <person name="Kikkawa E."/>
            <person name="Omura Y."/>
            <person name="Abe K."/>
            <person name="Kamihara K."/>
            <person name="Katsuta N."/>
            <person name="Sato K."/>
            <person name="Tanikawa M."/>
            <person name="Yamazaki M."/>
            <person name="Ninomiya K."/>
            <person name="Ishibashi T."/>
            <person name="Yamashita H."/>
            <person name="Murakawa K."/>
            <person name="Fujimori K."/>
            <person name="Tanai H."/>
            <person name="Kimata M."/>
            <person name="Watanabe M."/>
            <person name="Hiraoka S."/>
            <person name="Chiba Y."/>
            <person name="Ishida S."/>
            <person name="Ono Y."/>
            <person name="Takiguchi S."/>
            <person name="Watanabe S."/>
            <person name="Yosida M."/>
            <person name="Hotuta T."/>
            <person name="Kusano J."/>
            <person name="Kanehori K."/>
            <person name="Takahashi-Fujii A."/>
            <person name="Hara H."/>
            <person name="Tanase T.-O."/>
            <person name="Nomura Y."/>
            <person name="Togiya S."/>
            <person name="Komai F."/>
            <person name="Hara R."/>
            <person name="Takeuchi K."/>
            <person name="Arita M."/>
            <person name="Imose N."/>
            <person name="Musashino K."/>
            <person name="Yuuki H."/>
            <person name="Oshima A."/>
            <person name="Sasaki N."/>
            <person name="Aotsuka S."/>
            <person name="Yoshikawa Y."/>
            <person name="Matsunawa H."/>
            <person name="Ichihara T."/>
            <person name="Shiohata N."/>
            <person name="Sano S."/>
            <person name="Moriya S."/>
            <person name="Momiyama H."/>
            <person name="Satoh N."/>
            <person name="Takami S."/>
            <person name="Terashima Y."/>
            <person name="Suzuki O."/>
            <person name="Nakagawa S."/>
            <person name="Senoh A."/>
            <person name="Mizoguchi H."/>
            <person name="Goto Y."/>
            <person name="Shimizu F."/>
            <person name="Wakebe H."/>
            <person name="Hishigaki H."/>
            <person name="Watanabe T."/>
            <person name="Sugiyama A."/>
            <person name="Takemoto M."/>
            <person name="Kawakami B."/>
            <person name="Yamazaki M."/>
            <person name="Watanabe K."/>
            <person name="Kumagai A."/>
            <person name="Itakura S."/>
            <person name="Fukuzumi Y."/>
            <person name="Fujimori Y."/>
            <person name="Komiyama M."/>
            <person name="Tashiro H."/>
            <person name="Tanigami A."/>
            <person name="Fujiwara T."/>
            <person name="Ono T."/>
            <person name="Yamada K."/>
            <person name="Fujii Y."/>
            <person name="Ozaki K."/>
            <person name="Hirao M."/>
            <person name="Ohmori Y."/>
            <person name="Kawabata A."/>
            <person name="Hikiji T."/>
            <person name="Kobatake N."/>
            <person name="Inagaki H."/>
            <person name="Ikema Y."/>
            <person name="Okamoto S."/>
            <person name="Okitani R."/>
            <person name="Kawakami T."/>
            <person name="Noguchi S."/>
            <person name="Itoh T."/>
            <person name="Shigeta K."/>
            <person name="Senba T."/>
            <person name="Matsumura K."/>
            <person name="Nakajima Y."/>
            <person name="Mizuno T."/>
            <person name="Morinaga M."/>
            <person name="Sasaki M."/>
            <person name="Togashi T."/>
            <person name="Oyama M."/>
            <person name="Hata H."/>
            <person name="Watanabe M."/>
            <person name="Komatsu T."/>
            <person name="Mizushima-Sugano J."/>
            <person name="Satoh T."/>
            <person name="Shirai Y."/>
            <person name="Takahashi Y."/>
            <person name="Nakagawa K."/>
            <person name="Okumura K."/>
            <person name="Nagase T."/>
            <person name="Nomura N."/>
            <person name="Kikuchi H."/>
            <person name="Masuho Y."/>
            <person name="Yamashita R."/>
            <person name="Nakai K."/>
            <person name="Yada T."/>
            <person name="Nakamura Y."/>
            <person name="Ohara O."/>
            <person name="Isogai T."/>
            <person name="Sugano S."/>
        </authorList>
    </citation>
    <scope>NUCLEOTIDE SEQUENCE [LARGE SCALE MRNA] (ISOFORM 3)</scope>
    <source>
        <tissue>Spleen</tissue>
    </source>
</reference>
<reference key="4">
    <citation type="journal article" date="2006" name="Nature">
        <title>The finished DNA sequence of human chromosome 12.</title>
        <authorList>
            <person name="Scherer S.E."/>
            <person name="Muzny D.M."/>
            <person name="Buhay C.J."/>
            <person name="Chen R."/>
            <person name="Cree A."/>
            <person name="Ding Y."/>
            <person name="Dugan-Rocha S."/>
            <person name="Gill R."/>
            <person name="Gunaratne P."/>
            <person name="Harris R.A."/>
            <person name="Hawes A.C."/>
            <person name="Hernandez J."/>
            <person name="Hodgson A.V."/>
            <person name="Hume J."/>
            <person name="Jackson A."/>
            <person name="Khan Z.M."/>
            <person name="Kovar-Smith C."/>
            <person name="Lewis L.R."/>
            <person name="Lozado R.J."/>
            <person name="Metzker M.L."/>
            <person name="Milosavljevic A."/>
            <person name="Miner G.R."/>
            <person name="Montgomery K.T."/>
            <person name="Morgan M.B."/>
            <person name="Nazareth L.V."/>
            <person name="Scott G."/>
            <person name="Sodergren E."/>
            <person name="Song X.-Z."/>
            <person name="Steffen D."/>
            <person name="Lovering R.C."/>
            <person name="Wheeler D.A."/>
            <person name="Worley K.C."/>
            <person name="Yuan Y."/>
            <person name="Zhang Z."/>
            <person name="Adams C.Q."/>
            <person name="Ansari-Lari M.A."/>
            <person name="Ayele M."/>
            <person name="Brown M.J."/>
            <person name="Chen G."/>
            <person name="Chen Z."/>
            <person name="Clerc-Blankenburg K.P."/>
            <person name="Davis C."/>
            <person name="Delgado O."/>
            <person name="Dinh H.H."/>
            <person name="Draper H."/>
            <person name="Gonzalez-Garay M.L."/>
            <person name="Havlak P."/>
            <person name="Jackson L.R."/>
            <person name="Jacob L.S."/>
            <person name="Kelly S.H."/>
            <person name="Li L."/>
            <person name="Li Z."/>
            <person name="Liu J."/>
            <person name="Liu W."/>
            <person name="Lu J."/>
            <person name="Maheshwari M."/>
            <person name="Nguyen B.-V."/>
            <person name="Okwuonu G.O."/>
            <person name="Pasternak S."/>
            <person name="Perez L.M."/>
            <person name="Plopper F.J.H."/>
            <person name="Santibanez J."/>
            <person name="Shen H."/>
            <person name="Tabor P.E."/>
            <person name="Verduzco D."/>
            <person name="Waldron L."/>
            <person name="Wang Q."/>
            <person name="Williams G.A."/>
            <person name="Zhang J."/>
            <person name="Zhou J."/>
            <person name="Allen C.C."/>
            <person name="Amin A.G."/>
            <person name="Anyalebechi V."/>
            <person name="Bailey M."/>
            <person name="Barbaria J.A."/>
            <person name="Bimage K.E."/>
            <person name="Bryant N.P."/>
            <person name="Burch P.E."/>
            <person name="Burkett C.E."/>
            <person name="Burrell K.L."/>
            <person name="Calderon E."/>
            <person name="Cardenas V."/>
            <person name="Carter K."/>
            <person name="Casias K."/>
            <person name="Cavazos I."/>
            <person name="Cavazos S.R."/>
            <person name="Ceasar H."/>
            <person name="Chacko J."/>
            <person name="Chan S.N."/>
            <person name="Chavez D."/>
            <person name="Christopoulos C."/>
            <person name="Chu J."/>
            <person name="Cockrell R."/>
            <person name="Cox C.D."/>
            <person name="Dang M."/>
            <person name="Dathorne S.R."/>
            <person name="David R."/>
            <person name="Davis C.M."/>
            <person name="Davy-Carroll L."/>
            <person name="Deshazo D.R."/>
            <person name="Donlin J.E."/>
            <person name="D'Souza L."/>
            <person name="Eaves K.A."/>
            <person name="Egan A."/>
            <person name="Emery-Cohen A.J."/>
            <person name="Escotto M."/>
            <person name="Flagg N."/>
            <person name="Forbes L.D."/>
            <person name="Gabisi A.M."/>
            <person name="Garza M."/>
            <person name="Hamilton C."/>
            <person name="Henderson N."/>
            <person name="Hernandez O."/>
            <person name="Hines S."/>
            <person name="Hogues M.E."/>
            <person name="Huang M."/>
            <person name="Idlebird D.G."/>
            <person name="Johnson R."/>
            <person name="Jolivet A."/>
            <person name="Jones S."/>
            <person name="Kagan R."/>
            <person name="King L.M."/>
            <person name="Leal B."/>
            <person name="Lebow H."/>
            <person name="Lee S."/>
            <person name="LeVan J.M."/>
            <person name="Lewis L.C."/>
            <person name="London P."/>
            <person name="Lorensuhewa L.M."/>
            <person name="Loulseged H."/>
            <person name="Lovett D.A."/>
            <person name="Lucier A."/>
            <person name="Lucier R.L."/>
            <person name="Ma J."/>
            <person name="Madu R.C."/>
            <person name="Mapua P."/>
            <person name="Martindale A.D."/>
            <person name="Martinez E."/>
            <person name="Massey E."/>
            <person name="Mawhiney S."/>
            <person name="Meador M.G."/>
            <person name="Mendez S."/>
            <person name="Mercado C."/>
            <person name="Mercado I.C."/>
            <person name="Merritt C.E."/>
            <person name="Miner Z.L."/>
            <person name="Minja E."/>
            <person name="Mitchell T."/>
            <person name="Mohabbat F."/>
            <person name="Mohabbat K."/>
            <person name="Montgomery B."/>
            <person name="Moore N."/>
            <person name="Morris S."/>
            <person name="Munidasa M."/>
            <person name="Ngo R.N."/>
            <person name="Nguyen N.B."/>
            <person name="Nickerson E."/>
            <person name="Nwaokelemeh O.O."/>
            <person name="Nwokenkwo S."/>
            <person name="Obregon M."/>
            <person name="Oguh M."/>
            <person name="Oragunye N."/>
            <person name="Oviedo R.J."/>
            <person name="Parish B.J."/>
            <person name="Parker D.N."/>
            <person name="Parrish J."/>
            <person name="Parks K.L."/>
            <person name="Paul H.A."/>
            <person name="Payton B.A."/>
            <person name="Perez A."/>
            <person name="Perrin W."/>
            <person name="Pickens A."/>
            <person name="Primus E.L."/>
            <person name="Pu L.-L."/>
            <person name="Puazo M."/>
            <person name="Quiles M.M."/>
            <person name="Quiroz J.B."/>
            <person name="Rabata D."/>
            <person name="Reeves K."/>
            <person name="Ruiz S.J."/>
            <person name="Shao H."/>
            <person name="Sisson I."/>
            <person name="Sonaike T."/>
            <person name="Sorelle R.P."/>
            <person name="Sutton A.E."/>
            <person name="Svatek A.F."/>
            <person name="Svetz L.A."/>
            <person name="Tamerisa K.S."/>
            <person name="Taylor T.R."/>
            <person name="Teague B."/>
            <person name="Thomas N."/>
            <person name="Thorn R.D."/>
            <person name="Trejos Z.Y."/>
            <person name="Trevino B.K."/>
            <person name="Ukegbu O.N."/>
            <person name="Urban J.B."/>
            <person name="Vasquez L.I."/>
            <person name="Vera V.A."/>
            <person name="Villasana D.M."/>
            <person name="Wang L."/>
            <person name="Ward-Moore S."/>
            <person name="Warren J.T."/>
            <person name="Wei X."/>
            <person name="White F."/>
            <person name="Williamson A.L."/>
            <person name="Wleczyk R."/>
            <person name="Wooden H.S."/>
            <person name="Wooden S.H."/>
            <person name="Yen J."/>
            <person name="Yoon L."/>
            <person name="Yoon V."/>
            <person name="Zorrilla S.E."/>
            <person name="Nelson D."/>
            <person name="Kucherlapati R."/>
            <person name="Weinstock G."/>
            <person name="Gibbs R.A."/>
        </authorList>
    </citation>
    <scope>NUCLEOTIDE SEQUENCE [LARGE SCALE GENOMIC DNA]</scope>
</reference>
<reference key="5">
    <citation type="journal article" date="2001" name="Genome Res.">
        <title>Towards a catalog of human genes and proteins: sequencing and analysis of 500 novel complete protein coding human cDNAs.</title>
        <authorList>
            <person name="Wiemann S."/>
            <person name="Weil B."/>
            <person name="Wellenreuther R."/>
            <person name="Gassenhuber J."/>
            <person name="Glassl S."/>
            <person name="Ansorge W."/>
            <person name="Boecher M."/>
            <person name="Bloecker H."/>
            <person name="Bauersachs S."/>
            <person name="Blum H."/>
            <person name="Lauber J."/>
            <person name="Duesterhoeft A."/>
            <person name="Beyer A."/>
            <person name="Koehrer K."/>
            <person name="Strack N."/>
            <person name="Mewes H.-W."/>
            <person name="Ottenwaelder B."/>
            <person name="Obermaier B."/>
            <person name="Tampe J."/>
            <person name="Heubner D."/>
            <person name="Wambutt R."/>
            <person name="Korn B."/>
            <person name="Klein M."/>
            <person name="Poustka A."/>
        </authorList>
    </citation>
    <scope>NUCLEOTIDE SEQUENCE [LARGE SCALE MRNA] (ISOFORM 2)</scope>
    <source>
        <tissue>Testis</tissue>
    </source>
</reference>
<reference key="6">
    <citation type="journal article" date="2004" name="Genome Res.">
        <title>The status, quality, and expansion of the NIH full-length cDNA project: the Mammalian Gene Collection (MGC).</title>
        <authorList>
            <consortium name="The MGC Project Team"/>
        </authorList>
    </citation>
    <scope>NUCLEOTIDE SEQUENCE [LARGE SCALE MRNA] (ISOFORM 1)</scope>
    <source>
        <tissue>Eye</tissue>
    </source>
</reference>
<reference key="7">
    <citation type="journal article" date="1996" name="Genomics">
        <title>Coamplification in tumors of KRAS2, type 2 inositol 1,4,5 triphosphate receptor gene, and a novel human gene, KRAG.</title>
        <authorList>
            <person name="Heighway J."/>
            <person name="Betticher D.C."/>
            <person name="Hoban P.R."/>
            <person name="Altermatt H.J."/>
            <person name="Cowen R."/>
        </authorList>
    </citation>
    <scope>NUCLEOTIDE SEQUENCE [MRNA] OF 27-243 (ISOFORM 1)</scope>
    <source>
        <tissue>Brain</tissue>
        <tissue>Lung</tissue>
    </source>
</reference>
<feature type="chain" id="PRO_0000072226" description="Sarcospan">
    <location>
        <begin position="1"/>
        <end position="243"/>
    </location>
</feature>
<feature type="topological domain" description="Cytoplasmic" evidence="2">
    <location>
        <begin position="1"/>
        <end position="53"/>
    </location>
</feature>
<feature type="transmembrane region" description="Helical" evidence="2">
    <location>
        <begin position="54"/>
        <end position="74"/>
    </location>
</feature>
<feature type="topological domain" description="Extracellular" evidence="2">
    <location>
        <begin position="75"/>
        <end position="86"/>
    </location>
</feature>
<feature type="transmembrane region" description="Helical" evidence="2">
    <location>
        <begin position="87"/>
        <end position="107"/>
    </location>
</feature>
<feature type="topological domain" description="Cytoplasmic" evidence="2">
    <location>
        <begin position="108"/>
        <end position="122"/>
    </location>
</feature>
<feature type="transmembrane region" description="Helical" evidence="2">
    <location>
        <begin position="123"/>
        <end position="143"/>
    </location>
</feature>
<feature type="topological domain" description="Extracellular" evidence="2">
    <location>
        <begin position="144"/>
        <end position="193"/>
    </location>
</feature>
<feature type="transmembrane region" description="Helical" evidence="2">
    <location>
        <begin position="194"/>
        <end position="214"/>
    </location>
</feature>
<feature type="topological domain" description="Cytoplasmic" evidence="2">
    <location>
        <begin position="215"/>
        <end position="243"/>
    </location>
</feature>
<feature type="region of interest" description="Disordered" evidence="3">
    <location>
        <begin position="1"/>
        <end position="43"/>
    </location>
</feature>
<feature type="compositionally biased region" description="Low complexity" evidence="3">
    <location>
        <begin position="7"/>
        <end position="24"/>
    </location>
</feature>
<feature type="splice variant" id="VSP_046351" description="In isoform 3." evidence="5">
    <location>
        <begin position="1"/>
        <end position="103"/>
    </location>
</feature>
<feature type="splice variant" id="VSP_004431" description="In isoform 2." evidence="4 6">
    <location>
        <begin position="108"/>
        <end position="218"/>
    </location>
</feature>
<feature type="sequence variant" id="VAR_051384" description="In dbSNP:rs12313670.">
    <original>S</original>
    <variation>N</variation>
    <location>
        <position position="186"/>
    </location>
</feature>
<feature type="sequence variant" id="VAR_051385" description="In dbSNP:rs12313736.">
    <original>V</original>
    <variation>I</variation>
    <location>
        <position position="228"/>
    </location>
</feature>
<feature type="sequence conflict" description="In Ref. 1." evidence="7" ref="1">
    <location>
        <position position="13"/>
    </location>
</feature>
<proteinExistence type="evidence at protein level"/>